<sequence length="322" mass="35748">MLPFNSCVYVLLIISLMSNCRALCRATALQGRSLCATGGPDAAFRAEHERLSAFESRPSSGSYDMRRALDPIEIETWFHIVSGETDADLVTDEMVILQLHYLQKAYEKASISYRLKGVTRHINETWARNGDDSAMKKALRRGGYSTLNVYFQTNLQPPSTTDFARWTSDGDNRHAYNSDLAPPSVLGFCTLPDPSINSSSPRSSYSKDGCNVLAKTMPGGPMTHYNRGGTAIHEIGHWNGLLHTFEGESCSEDNAGDYIADTPQQSVPTDGCPSQKDSCPDSPGLDDIHNFMDYSSDDCYASFTSNQLKRMRDMWFSMRKGK</sequence>
<keyword id="KW-1015">Disulfide bond</keyword>
<keyword id="KW-0325">Glycoprotein</keyword>
<keyword id="KW-0378">Hydrolase</keyword>
<keyword id="KW-0479">Metal-binding</keyword>
<keyword id="KW-0482">Metalloprotease</keyword>
<keyword id="KW-0645">Protease</keyword>
<keyword id="KW-0964">Secreted</keyword>
<keyword id="KW-0732">Signal</keyword>
<keyword id="KW-0843">Virulence</keyword>
<keyword id="KW-0862">Zinc</keyword>
<comment type="function">
    <text evidence="1">Secreted metalloproteinase that allows assimilation of proteinaceous substrates. Plays a pivotal role as a pathogenicity determinant during infections and contributes to the ability of the pathogen to persist within the mammalian host (By similarity).</text>
</comment>
<comment type="subcellular location">
    <subcellularLocation>
        <location evidence="1">Secreted</location>
    </subcellularLocation>
</comment>
<comment type="similarity">
    <text evidence="3">Belongs to the peptidase M43B family.</text>
</comment>
<comment type="sequence caution" evidence="3">
    <conflict type="erroneous initiation">
        <sequence resource="EMBL-CDS" id="EDP56105"/>
    </conflict>
    <text>Extended N-terminus.</text>
</comment>
<dbReference type="EC" id="3.4.24.-"/>
<dbReference type="EMBL" id="DS499594">
    <property type="protein sequence ID" value="EDP56105.1"/>
    <property type="status" value="ALT_INIT"/>
    <property type="molecule type" value="Genomic_DNA"/>
</dbReference>
<dbReference type="SMR" id="B0XPZ1"/>
<dbReference type="OrthoDB" id="14198at5052"/>
<dbReference type="PhylomeDB" id="B0XPZ1"/>
<dbReference type="Proteomes" id="UP000001699">
    <property type="component" value="Unassembled WGS sequence"/>
</dbReference>
<dbReference type="GO" id="GO:0005576">
    <property type="term" value="C:extracellular region"/>
    <property type="evidence" value="ECO:0007669"/>
    <property type="project" value="UniProtKB-SubCell"/>
</dbReference>
<dbReference type="GO" id="GO:0046872">
    <property type="term" value="F:metal ion binding"/>
    <property type="evidence" value="ECO:0007669"/>
    <property type="project" value="UniProtKB-KW"/>
</dbReference>
<dbReference type="GO" id="GO:0008237">
    <property type="term" value="F:metallopeptidase activity"/>
    <property type="evidence" value="ECO:0007669"/>
    <property type="project" value="UniProtKB-KW"/>
</dbReference>
<dbReference type="GO" id="GO:0006508">
    <property type="term" value="P:proteolysis"/>
    <property type="evidence" value="ECO:0007669"/>
    <property type="project" value="UniProtKB-KW"/>
</dbReference>
<dbReference type="CDD" id="cd04275">
    <property type="entry name" value="ZnMc_pappalysin_like"/>
    <property type="match status" value="1"/>
</dbReference>
<dbReference type="Gene3D" id="3.40.390.10">
    <property type="entry name" value="Collagenase (Catalytic Domain)"/>
    <property type="match status" value="1"/>
</dbReference>
<dbReference type="InterPro" id="IPR024079">
    <property type="entry name" value="MetalloPept_cat_dom_sf"/>
</dbReference>
<dbReference type="InterPro" id="IPR008754">
    <property type="entry name" value="Peptidase_M43"/>
</dbReference>
<dbReference type="PANTHER" id="PTHR47466">
    <property type="match status" value="1"/>
</dbReference>
<dbReference type="PANTHER" id="PTHR47466:SF1">
    <property type="entry name" value="METALLOPROTEASE MEP1 (AFU_ORTHOLOGUE AFUA_1G07730)-RELATED"/>
    <property type="match status" value="1"/>
</dbReference>
<dbReference type="Pfam" id="PF05572">
    <property type="entry name" value="Peptidase_M43"/>
    <property type="match status" value="1"/>
</dbReference>
<dbReference type="SUPFAM" id="SSF55486">
    <property type="entry name" value="Metalloproteases ('zincins'), catalytic domain"/>
    <property type="match status" value="1"/>
</dbReference>
<gene>
    <name type="ORF">AFUB_008060</name>
</gene>
<feature type="signal peptide" evidence="2">
    <location>
        <begin position="1"/>
        <end position="22"/>
    </location>
</feature>
<feature type="chain" id="PRO_0000407197" description="Extracellular metalloprotease AFUB_008060">
    <location>
        <begin position="23"/>
        <end position="322"/>
    </location>
</feature>
<feature type="active site" evidence="1">
    <location>
        <position position="234"/>
    </location>
</feature>
<feature type="binding site" evidence="1">
    <location>
        <position position="233"/>
    </location>
    <ligand>
        <name>Zn(2+)</name>
        <dbReference type="ChEBI" id="CHEBI:29105"/>
        <note>catalytic</note>
    </ligand>
</feature>
<feature type="binding site" evidence="1">
    <location>
        <position position="237"/>
    </location>
    <ligand>
        <name>Zn(2+)</name>
        <dbReference type="ChEBI" id="CHEBI:29105"/>
        <note>catalytic</note>
    </ligand>
</feature>
<feature type="glycosylation site" description="N-linked (GlcNAc...) asparagine" evidence="2">
    <location>
        <position position="123"/>
    </location>
</feature>
<feature type="glycosylation site" description="N-linked (GlcNAc...) asparagine" evidence="2">
    <location>
        <position position="197"/>
    </location>
</feature>
<feature type="disulfide bond" evidence="1">
    <location>
        <begin position="272"/>
        <end position="299"/>
    </location>
</feature>
<reference key="1">
    <citation type="journal article" date="2008" name="PLoS Genet.">
        <title>Genomic islands in the pathogenic filamentous fungus Aspergillus fumigatus.</title>
        <authorList>
            <person name="Fedorova N.D."/>
            <person name="Khaldi N."/>
            <person name="Joardar V.S."/>
            <person name="Maiti R."/>
            <person name="Amedeo P."/>
            <person name="Anderson M.J."/>
            <person name="Crabtree J."/>
            <person name="Silva J.C."/>
            <person name="Badger J.H."/>
            <person name="Albarraq A."/>
            <person name="Angiuoli S."/>
            <person name="Bussey H."/>
            <person name="Bowyer P."/>
            <person name="Cotty P.J."/>
            <person name="Dyer P.S."/>
            <person name="Egan A."/>
            <person name="Galens K."/>
            <person name="Fraser-Liggett C.M."/>
            <person name="Haas B.J."/>
            <person name="Inman J.M."/>
            <person name="Kent R."/>
            <person name="Lemieux S."/>
            <person name="Malavazi I."/>
            <person name="Orvis J."/>
            <person name="Roemer T."/>
            <person name="Ronning C.M."/>
            <person name="Sundaram J.P."/>
            <person name="Sutton G."/>
            <person name="Turner G."/>
            <person name="Venter J.C."/>
            <person name="White O.R."/>
            <person name="Whitty B.R."/>
            <person name="Youngman P."/>
            <person name="Wolfe K.H."/>
            <person name="Goldman G.H."/>
            <person name="Wortman J.R."/>
            <person name="Jiang B."/>
            <person name="Denning D.W."/>
            <person name="Nierman W.C."/>
        </authorList>
    </citation>
    <scope>NUCLEOTIDE SEQUENCE [LARGE SCALE GENOMIC DNA]</scope>
    <source>
        <strain>CBS 144.89 / FGSC A1163 / CEA10</strain>
    </source>
</reference>
<organism>
    <name type="scientific">Aspergillus fumigatus (strain CBS 144.89 / FGSC A1163 / CEA10)</name>
    <name type="common">Neosartorya fumigata</name>
    <dbReference type="NCBI Taxonomy" id="451804"/>
    <lineage>
        <taxon>Eukaryota</taxon>
        <taxon>Fungi</taxon>
        <taxon>Dikarya</taxon>
        <taxon>Ascomycota</taxon>
        <taxon>Pezizomycotina</taxon>
        <taxon>Eurotiomycetes</taxon>
        <taxon>Eurotiomycetidae</taxon>
        <taxon>Eurotiales</taxon>
        <taxon>Aspergillaceae</taxon>
        <taxon>Aspergillus</taxon>
        <taxon>Aspergillus subgen. Fumigati</taxon>
    </lineage>
</organism>
<name>MEP1_ASPFC</name>
<evidence type="ECO:0000250" key="1"/>
<evidence type="ECO:0000255" key="2"/>
<evidence type="ECO:0000305" key="3"/>
<accession>B0XPZ1</accession>
<protein>
    <recommendedName>
        <fullName>Extracellular metalloprotease AFUB_008060</fullName>
        <ecNumber>3.4.24.-</ecNumber>
    </recommendedName>
</protein>
<proteinExistence type="inferred from homology"/>